<evidence type="ECO:0000255" key="1">
    <source>
        <dbReference type="HAMAP-Rule" id="MF_00551"/>
    </source>
</evidence>
<proteinExistence type="inferred from homology"/>
<name>URK_SALHS</name>
<organism>
    <name type="scientific">Salmonella heidelberg (strain SL476)</name>
    <dbReference type="NCBI Taxonomy" id="454169"/>
    <lineage>
        <taxon>Bacteria</taxon>
        <taxon>Pseudomonadati</taxon>
        <taxon>Pseudomonadota</taxon>
        <taxon>Gammaproteobacteria</taxon>
        <taxon>Enterobacterales</taxon>
        <taxon>Enterobacteriaceae</taxon>
        <taxon>Salmonella</taxon>
    </lineage>
</organism>
<dbReference type="EC" id="2.7.1.48" evidence="1"/>
<dbReference type="EMBL" id="CP001120">
    <property type="protein sequence ID" value="ACF67667.1"/>
    <property type="molecule type" value="Genomic_DNA"/>
</dbReference>
<dbReference type="RefSeq" id="WP_000132082.1">
    <property type="nucleotide sequence ID" value="NC_011083.1"/>
</dbReference>
<dbReference type="SMR" id="B4T9T4"/>
<dbReference type="GeneID" id="66756602"/>
<dbReference type="KEGG" id="seh:SeHA_C2349"/>
<dbReference type="HOGENOM" id="CLU_021278_1_2_6"/>
<dbReference type="UniPathway" id="UPA00574">
    <property type="reaction ID" value="UER00637"/>
</dbReference>
<dbReference type="UniPathway" id="UPA00579">
    <property type="reaction ID" value="UER00640"/>
</dbReference>
<dbReference type="Proteomes" id="UP000001866">
    <property type="component" value="Chromosome"/>
</dbReference>
<dbReference type="GO" id="GO:0005737">
    <property type="term" value="C:cytoplasm"/>
    <property type="evidence" value="ECO:0007669"/>
    <property type="project" value="UniProtKB-SubCell"/>
</dbReference>
<dbReference type="GO" id="GO:0005524">
    <property type="term" value="F:ATP binding"/>
    <property type="evidence" value="ECO:0007669"/>
    <property type="project" value="UniProtKB-UniRule"/>
</dbReference>
<dbReference type="GO" id="GO:0043771">
    <property type="term" value="F:cytidine kinase activity"/>
    <property type="evidence" value="ECO:0007669"/>
    <property type="project" value="RHEA"/>
</dbReference>
<dbReference type="GO" id="GO:0004849">
    <property type="term" value="F:uridine kinase activity"/>
    <property type="evidence" value="ECO:0007669"/>
    <property type="project" value="UniProtKB-UniRule"/>
</dbReference>
<dbReference type="GO" id="GO:0044211">
    <property type="term" value="P:CTP salvage"/>
    <property type="evidence" value="ECO:0007669"/>
    <property type="project" value="UniProtKB-UniRule"/>
</dbReference>
<dbReference type="GO" id="GO:0044206">
    <property type="term" value="P:UMP salvage"/>
    <property type="evidence" value="ECO:0007669"/>
    <property type="project" value="UniProtKB-UniRule"/>
</dbReference>
<dbReference type="CDD" id="cd02023">
    <property type="entry name" value="UMPK"/>
    <property type="match status" value="1"/>
</dbReference>
<dbReference type="FunFam" id="3.40.50.300:FF:000252">
    <property type="entry name" value="Uridine kinase"/>
    <property type="match status" value="1"/>
</dbReference>
<dbReference type="Gene3D" id="3.40.50.300">
    <property type="entry name" value="P-loop containing nucleotide triphosphate hydrolases"/>
    <property type="match status" value="1"/>
</dbReference>
<dbReference type="HAMAP" id="MF_00551">
    <property type="entry name" value="Uridine_kinase"/>
    <property type="match status" value="1"/>
</dbReference>
<dbReference type="InterPro" id="IPR027417">
    <property type="entry name" value="P-loop_NTPase"/>
</dbReference>
<dbReference type="InterPro" id="IPR006083">
    <property type="entry name" value="PRK/URK"/>
</dbReference>
<dbReference type="InterPro" id="IPR026008">
    <property type="entry name" value="Uridine_kinase"/>
</dbReference>
<dbReference type="InterPro" id="IPR000764">
    <property type="entry name" value="Uridine_kinase-like"/>
</dbReference>
<dbReference type="NCBIfam" id="NF004018">
    <property type="entry name" value="PRK05480.1"/>
    <property type="match status" value="1"/>
</dbReference>
<dbReference type="NCBIfam" id="TIGR00235">
    <property type="entry name" value="udk"/>
    <property type="match status" value="1"/>
</dbReference>
<dbReference type="PANTHER" id="PTHR10285">
    <property type="entry name" value="URIDINE KINASE"/>
    <property type="match status" value="1"/>
</dbReference>
<dbReference type="Pfam" id="PF00485">
    <property type="entry name" value="PRK"/>
    <property type="match status" value="1"/>
</dbReference>
<dbReference type="PRINTS" id="PR00988">
    <property type="entry name" value="URIDINKINASE"/>
</dbReference>
<dbReference type="SUPFAM" id="SSF52540">
    <property type="entry name" value="P-loop containing nucleoside triphosphate hydrolases"/>
    <property type="match status" value="1"/>
</dbReference>
<sequence>MTDQSHQCVIIGIAGASASGKSLIASTLYRELREQVGDEHIGVIPEDSYYKDQSHLSMEERVKTNYDHPNAMDHSLLFQHLQALKRGSAIELPVYSYVEHTRMQETVRVEPKKVIILEGILLLTDARLREEMNFSIFVDTPLDICLMRRIKRDVNERGRSMDSVMAQYQKTVRPMFLQFIEPSKQYADIIVPRGGKNRIAIDILKAKISQFFE</sequence>
<comment type="catalytic activity">
    <reaction evidence="1">
        <text>uridine + ATP = UMP + ADP + H(+)</text>
        <dbReference type="Rhea" id="RHEA:16825"/>
        <dbReference type="ChEBI" id="CHEBI:15378"/>
        <dbReference type="ChEBI" id="CHEBI:16704"/>
        <dbReference type="ChEBI" id="CHEBI:30616"/>
        <dbReference type="ChEBI" id="CHEBI:57865"/>
        <dbReference type="ChEBI" id="CHEBI:456216"/>
        <dbReference type="EC" id="2.7.1.48"/>
    </reaction>
</comment>
<comment type="catalytic activity">
    <reaction evidence="1">
        <text>cytidine + ATP = CMP + ADP + H(+)</text>
        <dbReference type="Rhea" id="RHEA:24674"/>
        <dbReference type="ChEBI" id="CHEBI:15378"/>
        <dbReference type="ChEBI" id="CHEBI:17562"/>
        <dbReference type="ChEBI" id="CHEBI:30616"/>
        <dbReference type="ChEBI" id="CHEBI:60377"/>
        <dbReference type="ChEBI" id="CHEBI:456216"/>
        <dbReference type="EC" id="2.7.1.48"/>
    </reaction>
</comment>
<comment type="pathway">
    <text evidence="1">Pyrimidine metabolism; CTP biosynthesis via salvage pathway; CTP from cytidine: step 1/3.</text>
</comment>
<comment type="pathway">
    <text evidence="1">Pyrimidine metabolism; UMP biosynthesis via salvage pathway; UMP from uridine: step 1/1.</text>
</comment>
<comment type="subcellular location">
    <subcellularLocation>
        <location evidence="1">Cytoplasm</location>
    </subcellularLocation>
</comment>
<comment type="similarity">
    <text evidence="1">Belongs to the uridine kinase family.</text>
</comment>
<protein>
    <recommendedName>
        <fullName evidence="1">Uridine kinase</fullName>
        <ecNumber evidence="1">2.7.1.48</ecNumber>
    </recommendedName>
    <alternativeName>
        <fullName evidence="1">Cytidine monophosphokinase</fullName>
    </alternativeName>
    <alternativeName>
        <fullName evidence="1">Uridine monophosphokinase</fullName>
    </alternativeName>
</protein>
<keyword id="KW-0067">ATP-binding</keyword>
<keyword id="KW-0963">Cytoplasm</keyword>
<keyword id="KW-0418">Kinase</keyword>
<keyword id="KW-0547">Nucleotide-binding</keyword>
<keyword id="KW-0808">Transferase</keyword>
<feature type="chain" id="PRO_1000129085" description="Uridine kinase">
    <location>
        <begin position="1"/>
        <end position="213"/>
    </location>
</feature>
<feature type="binding site" evidence="1">
    <location>
        <begin position="15"/>
        <end position="22"/>
    </location>
    <ligand>
        <name>ATP</name>
        <dbReference type="ChEBI" id="CHEBI:30616"/>
    </ligand>
</feature>
<gene>
    <name evidence="1" type="primary">udk</name>
    <name type="ordered locus">SeHA_C2349</name>
</gene>
<reference key="1">
    <citation type="journal article" date="2011" name="J. Bacteriol.">
        <title>Comparative genomics of 28 Salmonella enterica isolates: evidence for CRISPR-mediated adaptive sublineage evolution.</title>
        <authorList>
            <person name="Fricke W.F."/>
            <person name="Mammel M.K."/>
            <person name="McDermott P.F."/>
            <person name="Tartera C."/>
            <person name="White D.G."/>
            <person name="Leclerc J.E."/>
            <person name="Ravel J."/>
            <person name="Cebula T.A."/>
        </authorList>
    </citation>
    <scope>NUCLEOTIDE SEQUENCE [LARGE SCALE GENOMIC DNA]</scope>
    <source>
        <strain>SL476</strain>
    </source>
</reference>
<accession>B4T9T4</accession>